<gene>
    <name evidence="1" type="primary">L1</name>
</gene>
<accession>P22424</accession>
<protein>
    <recommendedName>
        <fullName evidence="1">Major capsid protein L1</fullName>
    </recommendedName>
</protein>
<reference key="1">
    <citation type="journal article" date="1990" name="Virology">
        <title>Genome organization and taxonomic position of human papillomavirus type 47 inferred from its DNA sequence.</title>
        <authorList>
            <person name="Kiyono T."/>
            <person name="Adachi A."/>
            <person name="Ishibashi M."/>
        </authorList>
    </citation>
    <scope>NUCLEOTIDE SEQUENCE [GENOMIC DNA]</scope>
</reference>
<sequence length="514" mass="58283">MAVWHSANGKVYLPPSTPVARVQSTDEYIQRTNIYYHANTDRLLTVGHPYFNVYNNNGTTLEVPKVSGNQHRVFRLKLPDPNRFALADMSVYNPDKERLVWACRGLEIGRGQPLGVGSTGHPYFNKVKDTENSNSYITNSKDDRQDTSFDPKQIQMFIVGCTPCIGEHWDKAEPCGEQQTGLCPPIELKNTYIQDGDMADIGFGNINFKALQHSRSDVSLDIVNETCKYPDFLKMQNDVYGDACFFYARREQCYARHFFVRGGKTGDDIPGAQVGNGNMKNQFYIPGATGQAQSTIGNAMYFPTVSGSLVSSDAQLFNRPFWLQRAQGHNNGILWANQMFVTVVDNTRNTNFSISVYSQAGDIKDIQDYNADNFREYQRHVEEYEISVILQLCKVPLKAEVLAQINAMNSSLLEEWQLGFVPTPDNPIQDTYRYLESLATRCPEKSPPKEKVDPYKGLNFWDVDMTERLSLDLDQYSLGRKFLFQAGLQQTTVNGTKTTPYRGSIRGTKRKRKN</sequence>
<feature type="chain" id="PRO_0000133530" description="Major capsid protein L1">
    <location>
        <begin position="1"/>
        <end position="514"/>
    </location>
</feature>
<feature type="region of interest" description="Disordered" evidence="2">
    <location>
        <begin position="495"/>
        <end position="514"/>
    </location>
</feature>
<feature type="disulfide bond" description="Interchain (with C-442)" evidence="1">
    <location>
        <position position="175"/>
    </location>
</feature>
<feature type="disulfide bond" description="Interchain (with C-175)" evidence="1">
    <location>
        <position position="442"/>
    </location>
</feature>
<organism>
    <name type="scientific">Human papillomavirus 47</name>
    <dbReference type="NCBI Taxonomy" id="10594"/>
    <lineage>
        <taxon>Viruses</taxon>
        <taxon>Monodnaviria</taxon>
        <taxon>Shotokuvirae</taxon>
        <taxon>Cossaviricota</taxon>
        <taxon>Papovaviricetes</taxon>
        <taxon>Zurhausenvirales</taxon>
        <taxon>Papillomaviridae</taxon>
        <taxon>Firstpapillomavirinae</taxon>
        <taxon>Betapapillomavirus</taxon>
        <taxon>Betapapillomavirus 1</taxon>
    </lineage>
</organism>
<proteinExistence type="inferred from homology"/>
<dbReference type="EMBL" id="M32305">
    <property type="protein sequence ID" value="AAA46982.1"/>
    <property type="molecule type" value="Genomic_DNA"/>
</dbReference>
<dbReference type="PIR" id="G35324">
    <property type="entry name" value="P1WL47"/>
</dbReference>
<dbReference type="SMR" id="P22424"/>
<dbReference type="Proteomes" id="UP000008697">
    <property type="component" value="Genome"/>
</dbReference>
<dbReference type="GO" id="GO:0042025">
    <property type="term" value="C:host cell nucleus"/>
    <property type="evidence" value="ECO:0007669"/>
    <property type="project" value="UniProtKB-SubCell"/>
</dbReference>
<dbReference type="GO" id="GO:0039620">
    <property type="term" value="C:T=7 icosahedral viral capsid"/>
    <property type="evidence" value="ECO:0007669"/>
    <property type="project" value="UniProtKB-UniRule"/>
</dbReference>
<dbReference type="GO" id="GO:0005198">
    <property type="term" value="F:structural molecule activity"/>
    <property type="evidence" value="ECO:0007669"/>
    <property type="project" value="UniProtKB-UniRule"/>
</dbReference>
<dbReference type="GO" id="GO:0075509">
    <property type="term" value="P:endocytosis involved in viral entry into host cell"/>
    <property type="evidence" value="ECO:0007669"/>
    <property type="project" value="UniProtKB-KW"/>
</dbReference>
<dbReference type="GO" id="GO:0019062">
    <property type="term" value="P:virion attachment to host cell"/>
    <property type="evidence" value="ECO:0007669"/>
    <property type="project" value="UniProtKB-UniRule"/>
</dbReference>
<dbReference type="Gene3D" id="2.60.175.20">
    <property type="entry name" value="Major capsid L1 (late) superfamily, Papillomavirus"/>
    <property type="match status" value="2"/>
</dbReference>
<dbReference type="HAMAP" id="MF_04002">
    <property type="entry name" value="PPV_L1"/>
    <property type="match status" value="1"/>
</dbReference>
<dbReference type="InterPro" id="IPR002210">
    <property type="entry name" value="Capsid_L1_Papillomavir"/>
</dbReference>
<dbReference type="InterPro" id="IPR036973">
    <property type="entry name" value="Capsid_L1_sf_Papillomavir"/>
</dbReference>
<dbReference type="InterPro" id="IPR011222">
    <property type="entry name" value="dsDNA_vir_gr_I_capsid"/>
</dbReference>
<dbReference type="Pfam" id="PF00500">
    <property type="entry name" value="Late_protein_L1"/>
    <property type="match status" value="1"/>
</dbReference>
<dbReference type="PRINTS" id="PR00865">
    <property type="entry name" value="HPVCAPSIDL1"/>
</dbReference>
<dbReference type="SUPFAM" id="SSF88648">
    <property type="entry name" value="Group I dsDNA viruses"/>
    <property type="match status" value="1"/>
</dbReference>
<evidence type="ECO:0000255" key="1">
    <source>
        <dbReference type="HAMAP-Rule" id="MF_04002"/>
    </source>
</evidence>
<evidence type="ECO:0000256" key="2">
    <source>
        <dbReference type="SAM" id="MobiDB-lite"/>
    </source>
</evidence>
<comment type="function">
    <text evidence="1">Forms an icosahedral capsid with a T=7 symmetry and a 50 nm diameter. The capsid is composed of 72 pentamers linked to each other by disulfide bonds and associated with L2 proteins. Binds to heparan sulfate proteoglycans on cell surface of basal layer keratinocytes to provide initial virion attachment. This binding mediates a conformational change in the virus capsid that facilitates efficient infection. The virion enters the host cell via endocytosis. During virus trafficking, L1 protein dissociates from the viral DNA and the genomic DNA is released to the host nucleus. The virion assembly takes place within the cell nucleus. Encapsulates the genomic DNA together with protein L2.</text>
</comment>
<comment type="subunit">
    <text evidence="1">Self-assembles into homopentamers. The capsid has an icosahedral symmetry and consists of 72 capsomers, with each capsomer being a pentamer of L1. Interacts with the minor capsid protein L2; this interaction is necessary for viral genome encapsidation. Interacts with protein E2; this interaction enhances E2-dependent replication and transcription activation.</text>
</comment>
<comment type="subcellular location">
    <subcellularLocation>
        <location evidence="1">Virion</location>
    </subcellularLocation>
    <subcellularLocation>
        <location evidence="1">Host nucleus</location>
    </subcellularLocation>
</comment>
<comment type="similarity">
    <text evidence="1">Belongs to the papillomaviridae L1 protein family.</text>
</comment>
<name>VL1_HPV47</name>
<keyword id="KW-0167">Capsid protein</keyword>
<keyword id="KW-1015">Disulfide bond</keyword>
<keyword id="KW-1048">Host nucleus</keyword>
<keyword id="KW-0945">Host-virus interaction</keyword>
<keyword id="KW-0426">Late protein</keyword>
<keyword id="KW-1145">T=7 icosahedral capsid protein</keyword>
<keyword id="KW-1161">Viral attachment to host cell</keyword>
<keyword id="KW-1162">Viral penetration into host cytoplasm</keyword>
<keyword id="KW-0946">Virion</keyword>
<keyword id="KW-1164">Virus endocytosis by host</keyword>
<keyword id="KW-1160">Virus entry into host cell</keyword>
<organismHost>
    <name type="scientific">Homo sapiens</name>
    <name type="common">Human</name>
    <dbReference type="NCBI Taxonomy" id="9606"/>
</organismHost>